<keyword id="KW-0106">Calcium</keyword>
<keyword id="KW-1003">Cell membrane</keyword>
<keyword id="KW-0175">Coiled coil</keyword>
<keyword id="KW-0407">Ion channel</keyword>
<keyword id="KW-0406">Ion transport</keyword>
<keyword id="KW-0472">Membrane</keyword>
<keyword id="KW-0479">Metal-binding</keyword>
<keyword id="KW-1185">Reference proteome</keyword>
<keyword id="KW-0716">Sensory transduction</keyword>
<keyword id="KW-0812">Transmembrane</keyword>
<keyword id="KW-1133">Transmembrane helix</keyword>
<keyword id="KW-0813">Transport</keyword>
<name>TRPM8_RAT</name>
<dbReference type="EMBL" id="AY072788">
    <property type="protein sequence ID" value="AAL68394.2"/>
    <property type="molecule type" value="mRNA"/>
</dbReference>
<dbReference type="RefSeq" id="NP_599198.2">
    <property type="nucleotide sequence ID" value="NM_134371.2"/>
</dbReference>
<dbReference type="RefSeq" id="XP_038938925.1">
    <property type="nucleotide sequence ID" value="XM_039082997.2"/>
</dbReference>
<dbReference type="SMR" id="Q8R455"/>
<dbReference type="DIP" id="DIP-61851N"/>
<dbReference type="FunCoup" id="Q8R455">
    <property type="interactions" value="28"/>
</dbReference>
<dbReference type="IntAct" id="Q8R455">
    <property type="interactions" value="1"/>
</dbReference>
<dbReference type="STRING" id="10116.ENSRNOP00000025879"/>
<dbReference type="BindingDB" id="Q8R455"/>
<dbReference type="ChEMBL" id="CHEMBL5011"/>
<dbReference type="DrugCentral" id="Q8R455"/>
<dbReference type="GuidetoPHARMACOLOGY" id="500"/>
<dbReference type="iPTMnet" id="Q8R455"/>
<dbReference type="PhosphoSitePlus" id="Q8R455"/>
<dbReference type="PaxDb" id="10116-ENSRNOP00000025879"/>
<dbReference type="Ensembl" id="ENSRNOT00000025879.5">
    <property type="protein sequence ID" value="ENSRNOP00000025879.4"/>
    <property type="gene ID" value="ENSRNOG00000019035.5"/>
</dbReference>
<dbReference type="GeneID" id="171384"/>
<dbReference type="KEGG" id="rno:171384"/>
<dbReference type="AGR" id="RGD:620762"/>
<dbReference type="CTD" id="79054"/>
<dbReference type="RGD" id="620762">
    <property type="gene designation" value="Trpm8"/>
</dbReference>
<dbReference type="eggNOG" id="KOG3614">
    <property type="taxonomic scope" value="Eukaryota"/>
</dbReference>
<dbReference type="GeneTree" id="ENSGT00940000160270"/>
<dbReference type="HOGENOM" id="CLU_001390_0_0_1"/>
<dbReference type="InParanoid" id="Q8R455"/>
<dbReference type="OMA" id="VAYHANM"/>
<dbReference type="OrthoDB" id="310870at2759"/>
<dbReference type="PhylomeDB" id="Q8R455"/>
<dbReference type="TreeFam" id="TF314204"/>
<dbReference type="Reactome" id="R-RNO-3295583">
    <property type="pathway name" value="TRP channels"/>
</dbReference>
<dbReference type="PRO" id="PR:Q8R455"/>
<dbReference type="Proteomes" id="UP000002494">
    <property type="component" value="Chromosome 9"/>
</dbReference>
<dbReference type="Bgee" id="ENSRNOG00000019035">
    <property type="expression patterns" value="Expressed in ovary and 2 other cell types or tissues"/>
</dbReference>
<dbReference type="GO" id="GO:0009897">
    <property type="term" value="C:external side of plasma membrane"/>
    <property type="evidence" value="ECO:0000266"/>
    <property type="project" value="RGD"/>
</dbReference>
<dbReference type="GO" id="GO:0016020">
    <property type="term" value="C:membrane"/>
    <property type="evidence" value="ECO:0000266"/>
    <property type="project" value="RGD"/>
</dbReference>
<dbReference type="GO" id="GO:0045121">
    <property type="term" value="C:membrane raft"/>
    <property type="evidence" value="ECO:0000266"/>
    <property type="project" value="RGD"/>
</dbReference>
<dbReference type="GO" id="GO:0005886">
    <property type="term" value="C:plasma membrane"/>
    <property type="evidence" value="ECO:0000266"/>
    <property type="project" value="RGD"/>
</dbReference>
<dbReference type="GO" id="GO:0044853">
    <property type="term" value="C:plasma membrane raft"/>
    <property type="evidence" value="ECO:0000314"/>
    <property type="project" value="UniProtKB"/>
</dbReference>
<dbReference type="GO" id="GO:0005262">
    <property type="term" value="F:calcium channel activity"/>
    <property type="evidence" value="ECO:0000266"/>
    <property type="project" value="RGD"/>
</dbReference>
<dbReference type="GO" id="GO:0042802">
    <property type="term" value="F:identical protein binding"/>
    <property type="evidence" value="ECO:0000314"/>
    <property type="project" value="UniProtKB"/>
</dbReference>
<dbReference type="GO" id="GO:0099604">
    <property type="term" value="F:ligand-gated calcium channel activity"/>
    <property type="evidence" value="ECO:0000318"/>
    <property type="project" value="GO_Central"/>
</dbReference>
<dbReference type="GO" id="GO:0046872">
    <property type="term" value="F:metal ion binding"/>
    <property type="evidence" value="ECO:0007669"/>
    <property type="project" value="UniProtKB-KW"/>
</dbReference>
<dbReference type="GO" id="GO:0005216">
    <property type="term" value="F:monoatomic ion channel activity"/>
    <property type="evidence" value="ECO:0000314"/>
    <property type="project" value="UniProtKB"/>
</dbReference>
<dbReference type="GO" id="GO:0070588">
    <property type="term" value="P:calcium ion transmembrane transport"/>
    <property type="evidence" value="ECO:0000314"/>
    <property type="project" value="UniProtKB"/>
</dbReference>
<dbReference type="GO" id="GO:0006816">
    <property type="term" value="P:calcium ion transport"/>
    <property type="evidence" value="ECO:0000266"/>
    <property type="project" value="RGD"/>
</dbReference>
<dbReference type="GO" id="GO:0006874">
    <property type="term" value="P:intracellular calcium ion homeostasis"/>
    <property type="evidence" value="ECO:0000266"/>
    <property type="project" value="RGD"/>
</dbReference>
<dbReference type="GO" id="GO:0120162">
    <property type="term" value="P:positive regulation of cold-induced thermogenesis"/>
    <property type="evidence" value="ECO:0000250"/>
    <property type="project" value="YuBioLab"/>
</dbReference>
<dbReference type="GO" id="GO:0009409">
    <property type="term" value="P:response to cold"/>
    <property type="evidence" value="ECO:0000314"/>
    <property type="project" value="UniProtKB"/>
</dbReference>
<dbReference type="GO" id="GO:0009266">
    <property type="term" value="P:response to temperature stimulus"/>
    <property type="evidence" value="ECO:0000266"/>
    <property type="project" value="RGD"/>
</dbReference>
<dbReference type="GO" id="GO:0050955">
    <property type="term" value="P:thermoception"/>
    <property type="evidence" value="ECO:0000266"/>
    <property type="project" value="RGD"/>
</dbReference>
<dbReference type="InterPro" id="IPR005821">
    <property type="entry name" value="Ion_trans_dom"/>
</dbReference>
<dbReference type="InterPro" id="IPR050927">
    <property type="entry name" value="TRPM"/>
</dbReference>
<dbReference type="InterPro" id="IPR041491">
    <property type="entry name" value="TRPM_SLOG"/>
</dbReference>
<dbReference type="PANTHER" id="PTHR13800:SF9">
    <property type="entry name" value="TRANSIENT RECEPTOR POTENTIAL CATION CHANNEL SUBFAMILY M MEMBER 8"/>
    <property type="match status" value="1"/>
</dbReference>
<dbReference type="PANTHER" id="PTHR13800">
    <property type="entry name" value="TRANSIENT RECEPTOR POTENTIAL CATION CHANNEL, SUBFAMILY M, MEMBER 6"/>
    <property type="match status" value="1"/>
</dbReference>
<dbReference type="Pfam" id="PF00520">
    <property type="entry name" value="Ion_trans"/>
    <property type="match status" value="1"/>
</dbReference>
<dbReference type="Pfam" id="PF18139">
    <property type="entry name" value="LSDAT_euk"/>
    <property type="match status" value="1"/>
</dbReference>
<dbReference type="Pfam" id="PF25508">
    <property type="entry name" value="TRPM2"/>
    <property type="match status" value="1"/>
</dbReference>
<proteinExistence type="evidence at protein level"/>
<accession>Q8R455</accession>
<comment type="function">
    <text evidence="1 2 4">Non-selective ion channel permeable to monovalent and divalent cations, including Na(+), K(+), and Ca(2+), with higher permeability for Ca(2+) (PubMed:11882888). Activated by multiple factors, such as temperature, voltage, pressure, and changes in osmolality. Activated by cool temperatures (&lt;23-28 degrees Celsius) and by chemical ligands evoking a sensation of coolness, such as menthol and icilin, therefore plays a central role in the detection of environmental cold temperatures (By similarity). TRPM8 is a voltage-dependent channel; its activation by cold or chemical ligands shifts its voltage thresholds towards physiological membrane potentials, leading to the opening of the channel (By similarity). In addition to its critical role in temperature sensing, regulates basal tear secretion by sensing evaporation-induced cooling and changes in osmolality (By similarity).</text>
</comment>
<comment type="catalytic activity">
    <reaction evidence="4">
        <text>Ca(2+)(in) = Ca(2+)(out)</text>
        <dbReference type="Rhea" id="RHEA:29671"/>
        <dbReference type="ChEBI" id="CHEBI:29108"/>
    </reaction>
</comment>
<comment type="catalytic activity">
    <reaction evidence="4">
        <text>Na(+)(in) = Na(+)(out)</text>
        <dbReference type="Rhea" id="RHEA:34963"/>
        <dbReference type="ChEBI" id="CHEBI:29101"/>
    </reaction>
</comment>
<comment type="catalytic activity">
    <reaction evidence="4">
        <text>K(+)(in) = K(+)(out)</text>
        <dbReference type="Rhea" id="RHEA:29463"/>
        <dbReference type="ChEBI" id="CHEBI:29103"/>
    </reaction>
</comment>
<comment type="activity regulation">
    <text evidence="1 2">Activated by cold temperatures and by both natural and synthetic cooling compounds such as menthol and icilin (By similarity). Activation of the channel requires the presence of PI(4,5)P2; PI(4,5)P2 is necessary to gate the channel. Activated by intracellular Ca(2+) (By similarity).</text>
</comment>
<comment type="subunit">
    <text evidence="1 2 7">Homotetramer (PubMed:20214891). Interacts (via N-terminus and C-terminus domains) with TCAF1; the interaction stimulates TRPM8 channel activity. Interacts (via N-terminus and C-terminus domains) with TCAF2; the interaction inhibits TRPM8 channel activity (By similarity).</text>
</comment>
<comment type="interaction">
    <interactant intactId="EBI-15993527">
        <id>Q8R455</id>
    </interactant>
    <interactant intactId="EBI-3909604">
        <id>P50148</id>
        <label>GNAQ</label>
    </interactant>
    <organismsDiffer>true</organismsDiffer>
    <experiments>4</experiments>
</comment>
<comment type="subcellular location">
    <subcellularLocation>
        <location evidence="2">Cell membrane</location>
        <topology evidence="1">Multi-pass membrane protein</topology>
    </subcellularLocation>
    <subcellularLocation>
        <location evidence="6">Membrane raft</location>
    </subcellularLocation>
    <text evidence="6">Lipid raft association of TRPM8 modulates channel activity.</text>
</comment>
<comment type="tissue specificity">
    <text evidence="4 5">Expressed in dorsal root and trigeminal ganglia. Specifically expressed in a subset of sensory neurons, including cold-sensitive neurons in trigeminal neurons.</text>
</comment>
<comment type="domain">
    <text evidence="1">The coiled coil region is required for multimerization.</text>
</comment>
<comment type="domain">
    <text evidence="2">Cooling agents bind within a pocket formed entirely by the S1-S4 helices that opens to the cytoplasm.</text>
</comment>
<comment type="similarity">
    <text evidence="9">Belongs to the transient receptor (TC 1.A.4) family. LTrpC subfamily. TRPM8 sub-subfamily.</text>
</comment>
<sequence>MSFEGARLSMRSRRNGTLGSTRTLYSSVSRSTDVSYSESDLVNFIQANFKKRECVFFTRDSKAMESICKCGYAQSQHIEGTQINQNEKWNYKKHTKEFPTDAFGDIQFETLGKKGKYLRLSCDTDSETLYELLTQHWHLKTPNLVISVTGGAKNFALKPRMRKIFSRLIYIAQSKGAWILTGGTHYGLMKYIGEVVRDNTISRNSEENIVAIGIAAWGMVSNRDTLIRNCDDEGHFSAQYIMDDFMRDPLYILDNNHTHLLLVDNGCHGHPTVEAKLRNQLEKYISERTSQDSNYGGKIPIVCFAQGGGRETLKAINTSVKSKIPCVVVEGSGQIADVIASLVEVEDVLTSSMVKEKLVRFLPRTVSRLPEEEIESWIKWLKEILESPHLLTVIKMEEAGDEVVSSAISYALYKAFSTNEQDKDNWNGQLKLLLEWNQLDLASDEIFTNDRRWESADLQEVMFTALIKDRPKFVRLFLENGLNLQKFLTNEVLTELFSTHFSTLVYRNLQIAKNSYNDALLTFVWKLVANFRRSFWKEDRSSREDLDVELHDASLTTRHPLQALFIWAILQNKKELSKVIWEQTKGCTLAALGASKLLKTLAKVKNDINAAGESEELANEYETRAVELFTECYSSDEDLAEQLLVYSCEAWGGSNCLELAVEATDQHFIAQPGVQNFLSKQWYGEISRDTKNWKIILCLFIIPLVGCGLVSFRKKPIDKHKKLLWYYVAFFTSPFVVFSWNVVFYIAFLLLFAYVLLMDFHSVPHTPELILYALVFVLFCDEVRQWYMNGVNYFTDLWNVMDTLGLFYFIAGIVFRLHSSNKSSLYSGRVIFCLDYIIFTLRLIHIFTVSRNLGPKIIMLQRMLIDVFFFLFLFAVWMVAFGVARQGILRQNEQRWRWIFRSVIYEPYLAMFGQVPSDVDSTTYDFSHCTFSGNESKPLCVELDEYNLPRFPEWITIPLVCIYMLSTNILLVNLLVAMFGYTVGIVQENNDQVWKFQRYFLVQEYCNRLNIPFPFVVFAYFYMVVKKCFKCCCKEKNTESSACCFRNEDNETLAWEGVMKENYLVKINTKANDNAEEMRHRFRQLDTKLNDLKGLLKEIANKIK</sequence>
<feature type="chain" id="PRO_0000215335" description="Transient receptor potential cation channel subfamily M member 8">
    <location>
        <begin position="1"/>
        <end position="1104"/>
    </location>
</feature>
<feature type="topological domain" description="Cytoplasmic" evidence="9">
    <location>
        <begin position="1"/>
        <end position="733"/>
    </location>
</feature>
<feature type="transmembrane region" description="Helical; Name=1" evidence="2">
    <location>
        <begin position="734"/>
        <end position="758"/>
    </location>
</feature>
<feature type="topological domain" description="Extracellular" evidence="9">
    <location>
        <begin position="759"/>
        <end position="765"/>
    </location>
</feature>
<feature type="transmembrane region" description="Helical; Name=2" evidence="2">
    <location>
        <begin position="766"/>
        <end position="789"/>
    </location>
</feature>
<feature type="topological domain" description="Cytoplasmic" evidence="9">
    <location>
        <begin position="790"/>
        <end position="796"/>
    </location>
</feature>
<feature type="transmembrane region" description="Helical; Name=3" evidence="2">
    <location>
        <begin position="797"/>
        <end position="817"/>
    </location>
</feature>
<feature type="topological domain" description="Extracellular" evidence="9">
    <location>
        <begin position="818"/>
        <end position="822"/>
    </location>
</feature>
<feature type="transmembrane region" description="Helical; Name=4" evidence="2">
    <location>
        <begin position="823"/>
        <end position="848"/>
    </location>
</feature>
<feature type="topological domain" description="Cytoplasmic" evidence="9">
    <location>
        <begin position="849"/>
        <end position="853"/>
    </location>
</feature>
<feature type="transmembrane region" description="Helical; Name=5" evidence="2">
    <location>
        <begin position="854"/>
        <end position="890"/>
    </location>
</feature>
<feature type="topological domain" description="Extracellular" evidence="9">
    <location>
        <begin position="891"/>
        <end position="895"/>
    </location>
</feature>
<feature type="intramembrane region" description="Pore-forming" evidence="2">
    <location>
        <begin position="896"/>
        <end position="912"/>
    </location>
</feature>
<feature type="topological domain" description="Extracellular" evidence="9">
    <location>
        <begin position="913"/>
        <end position="953"/>
    </location>
</feature>
<feature type="transmembrane region" description="Helical; Name=6" evidence="2">
    <location>
        <begin position="954"/>
        <end position="984"/>
    </location>
</feature>
<feature type="topological domain" description="Cytoplasmic" evidence="9">
    <location>
        <begin position="985"/>
        <end position="1104"/>
    </location>
</feature>
<feature type="coiled-coil region" evidence="3">
    <location>
        <begin position="1067"/>
        <end position="1104"/>
    </location>
</feature>
<feature type="binding site" evidence="2">
    <location>
        <position position="782"/>
    </location>
    <ligand>
        <name>Ca(2+)</name>
        <dbReference type="ChEBI" id="CHEBI:29108"/>
    </ligand>
</feature>
<feature type="binding site" evidence="2">
    <location>
        <position position="785"/>
    </location>
    <ligand>
        <name>Ca(2+)</name>
        <dbReference type="ChEBI" id="CHEBI:29108"/>
    </ligand>
</feature>
<feature type="binding site" evidence="2">
    <location>
        <position position="799"/>
    </location>
    <ligand>
        <name>Ca(2+)</name>
        <dbReference type="ChEBI" id="CHEBI:29108"/>
    </ligand>
</feature>
<feature type="binding site" evidence="2">
    <location>
        <position position="802"/>
    </location>
    <ligand>
        <name>Ca(2+)</name>
        <dbReference type="ChEBI" id="CHEBI:29108"/>
    </ligand>
</feature>
<evidence type="ECO:0000250" key="1">
    <source>
        <dbReference type="UniProtKB" id="Q7Z2W7"/>
    </source>
</evidence>
<evidence type="ECO:0000250" key="2">
    <source>
        <dbReference type="UniProtKB" id="Q8R4D5"/>
    </source>
</evidence>
<evidence type="ECO:0000255" key="3"/>
<evidence type="ECO:0000269" key="4">
    <source>
    </source>
</evidence>
<evidence type="ECO:0000269" key="5">
    <source>
    </source>
</evidence>
<evidence type="ECO:0000269" key="6">
    <source>
    </source>
</evidence>
<evidence type="ECO:0000269" key="7">
    <source>
    </source>
</evidence>
<evidence type="ECO:0000303" key="8">
    <source>
    </source>
</evidence>
<evidence type="ECO:0000305" key="9"/>
<reference key="1">
    <citation type="journal article" date="2002" name="Nature">
        <title>Identification of a cold receptor reveals a general role for TRP channels in thermosensation.</title>
        <authorList>
            <person name="McKemy D.D."/>
            <person name="Neuhausser W.M."/>
            <person name="Julius D."/>
        </authorList>
    </citation>
    <scope>NUCLEOTIDE SEQUENCE [MRNA]</scope>
    <scope>FUNCTION</scope>
    <scope>TRANSPORTER ACTIVITY</scope>
    <scope>TISSUE SPECIFICITY</scope>
    <source>
        <tissue>Trigeminal ganglion</tissue>
    </source>
</reference>
<reference key="2">
    <citation type="submission" date="2004-09" db="EMBL/GenBank/DDBJ databases">
        <authorList>
            <person name="McKemy D.D."/>
            <person name="Neuhausser W.M."/>
            <person name="Julius D."/>
        </authorList>
    </citation>
    <scope>SEQUENCE REVISION TO 449</scope>
    <source>
        <tissue>Trigeminal ganglion</tissue>
    </source>
</reference>
<reference key="3">
    <citation type="journal article" date="2003" name="J. Neurophysiol.">
        <title>TRPM8 mRNA is expressed in a subset of cold-responsive trigeminal neurons from rat.</title>
        <authorList>
            <person name="Nealen M.L."/>
            <person name="Gold M.S."/>
            <person name="Thut P.D."/>
            <person name="Caterina M.J."/>
        </authorList>
    </citation>
    <scope>TISSUE SPECIFICITY</scope>
</reference>
<reference key="4">
    <citation type="journal article" date="2009" name="J. Biol. Chem.">
        <title>Lipid raft segregation modulates TRPM8 channel activity.</title>
        <authorList>
            <person name="Morenilla-Palao C."/>
            <person name="Pertusa M."/>
            <person name="Meseguer V."/>
            <person name="Cabedo H."/>
            <person name="Viana F."/>
        </authorList>
    </citation>
    <scope>SUBCELLULAR LOCATION</scope>
</reference>
<reference key="5">
    <citation type="journal article" date="2010" name="Biochem. Biophys. Res. Commun.">
        <title>AFM imaging reveals the tetrameric structure of the TRPM8 channel.</title>
        <authorList>
            <person name="Stewart A.P."/>
            <person name="Egressy K."/>
            <person name="Lim A."/>
            <person name="Edwardson J.M."/>
        </authorList>
    </citation>
    <scope>SUBUNIT</scope>
</reference>
<organism>
    <name type="scientific">Rattus norvegicus</name>
    <name type="common">Rat</name>
    <dbReference type="NCBI Taxonomy" id="10116"/>
    <lineage>
        <taxon>Eukaryota</taxon>
        <taxon>Metazoa</taxon>
        <taxon>Chordata</taxon>
        <taxon>Craniata</taxon>
        <taxon>Vertebrata</taxon>
        <taxon>Euteleostomi</taxon>
        <taxon>Mammalia</taxon>
        <taxon>Eutheria</taxon>
        <taxon>Euarchontoglires</taxon>
        <taxon>Glires</taxon>
        <taxon>Rodentia</taxon>
        <taxon>Myomorpha</taxon>
        <taxon>Muroidea</taxon>
        <taxon>Muridae</taxon>
        <taxon>Murinae</taxon>
        <taxon>Rattus</taxon>
    </lineage>
</organism>
<gene>
    <name type="primary">Trpm8</name>
    <name evidence="8" type="synonym">Cmr1</name>
</gene>
<protein>
    <recommendedName>
        <fullName>Transient receptor potential cation channel subfamily M member 8</fullName>
    </recommendedName>
    <alternativeName>
        <fullName evidence="8">Cold menthol receptor 1</fullName>
    </alternativeName>
</protein>